<accession>B1I8F3</accession>
<evidence type="ECO:0000255" key="1">
    <source>
        <dbReference type="HAMAP-Rule" id="MF_00178"/>
    </source>
</evidence>
<sequence>MNTYEGNLVANNIKIGIVVARFNEFITSKLLSGALDNLKRENVNEKDIEVAWVPGAFEIPLIASKMAKSKKYDAIICLGAVIRGNTSHYDYVCSEVSKGIAQISLNSEIPVMFGVLTTDTIEQAIERAGTKAGNKGSECAQGAIEMVNLIRTLDA</sequence>
<organism>
    <name type="scientific">Streptococcus pneumoniae (strain Hungary19A-6)</name>
    <dbReference type="NCBI Taxonomy" id="487214"/>
    <lineage>
        <taxon>Bacteria</taxon>
        <taxon>Bacillati</taxon>
        <taxon>Bacillota</taxon>
        <taxon>Bacilli</taxon>
        <taxon>Lactobacillales</taxon>
        <taxon>Streptococcaceae</taxon>
        <taxon>Streptococcus</taxon>
    </lineage>
</organism>
<keyword id="KW-0686">Riboflavin biosynthesis</keyword>
<keyword id="KW-0808">Transferase</keyword>
<dbReference type="EC" id="2.5.1.78" evidence="1"/>
<dbReference type="EMBL" id="CP000936">
    <property type="protein sequence ID" value="ACA36558.1"/>
    <property type="molecule type" value="Genomic_DNA"/>
</dbReference>
<dbReference type="SMR" id="B1I8F3"/>
<dbReference type="KEGG" id="spv:SPH_0278"/>
<dbReference type="HOGENOM" id="CLU_089358_1_1_9"/>
<dbReference type="UniPathway" id="UPA00275">
    <property type="reaction ID" value="UER00404"/>
</dbReference>
<dbReference type="Proteomes" id="UP000002163">
    <property type="component" value="Chromosome"/>
</dbReference>
<dbReference type="GO" id="GO:0005829">
    <property type="term" value="C:cytosol"/>
    <property type="evidence" value="ECO:0007669"/>
    <property type="project" value="TreeGrafter"/>
</dbReference>
<dbReference type="GO" id="GO:0009349">
    <property type="term" value="C:riboflavin synthase complex"/>
    <property type="evidence" value="ECO:0007669"/>
    <property type="project" value="InterPro"/>
</dbReference>
<dbReference type="GO" id="GO:0000906">
    <property type="term" value="F:6,7-dimethyl-8-ribityllumazine synthase activity"/>
    <property type="evidence" value="ECO:0007669"/>
    <property type="project" value="UniProtKB-UniRule"/>
</dbReference>
<dbReference type="GO" id="GO:0009231">
    <property type="term" value="P:riboflavin biosynthetic process"/>
    <property type="evidence" value="ECO:0007669"/>
    <property type="project" value="UniProtKB-UniRule"/>
</dbReference>
<dbReference type="CDD" id="cd09209">
    <property type="entry name" value="Lumazine_synthase-I"/>
    <property type="match status" value="1"/>
</dbReference>
<dbReference type="FunFam" id="3.40.50.960:FF:000001">
    <property type="entry name" value="6,7-dimethyl-8-ribityllumazine synthase"/>
    <property type="match status" value="1"/>
</dbReference>
<dbReference type="Gene3D" id="3.40.50.960">
    <property type="entry name" value="Lumazine/riboflavin synthase"/>
    <property type="match status" value="1"/>
</dbReference>
<dbReference type="HAMAP" id="MF_00178">
    <property type="entry name" value="Lumazine_synth"/>
    <property type="match status" value="1"/>
</dbReference>
<dbReference type="InterPro" id="IPR034964">
    <property type="entry name" value="LS"/>
</dbReference>
<dbReference type="InterPro" id="IPR002180">
    <property type="entry name" value="LS/RS"/>
</dbReference>
<dbReference type="InterPro" id="IPR036467">
    <property type="entry name" value="LS/RS_sf"/>
</dbReference>
<dbReference type="NCBIfam" id="TIGR00114">
    <property type="entry name" value="lumazine-synth"/>
    <property type="match status" value="1"/>
</dbReference>
<dbReference type="NCBIfam" id="NF000812">
    <property type="entry name" value="PRK00061.1-4"/>
    <property type="match status" value="1"/>
</dbReference>
<dbReference type="PANTHER" id="PTHR21058:SF0">
    <property type="entry name" value="6,7-DIMETHYL-8-RIBITYLLUMAZINE SYNTHASE"/>
    <property type="match status" value="1"/>
</dbReference>
<dbReference type="PANTHER" id="PTHR21058">
    <property type="entry name" value="6,7-DIMETHYL-8-RIBITYLLUMAZINE SYNTHASE DMRL SYNTHASE LUMAZINE SYNTHASE"/>
    <property type="match status" value="1"/>
</dbReference>
<dbReference type="Pfam" id="PF00885">
    <property type="entry name" value="DMRL_synthase"/>
    <property type="match status" value="1"/>
</dbReference>
<dbReference type="SUPFAM" id="SSF52121">
    <property type="entry name" value="Lumazine synthase"/>
    <property type="match status" value="1"/>
</dbReference>
<name>RISB_STRPI</name>
<protein>
    <recommendedName>
        <fullName evidence="1">6,7-dimethyl-8-ribityllumazine synthase</fullName>
        <shortName evidence="1">DMRL synthase</shortName>
        <shortName evidence="1">LS</shortName>
        <shortName evidence="1">Lumazine synthase</shortName>
        <ecNumber evidence="1">2.5.1.78</ecNumber>
    </recommendedName>
</protein>
<reference key="1">
    <citation type="journal article" date="2010" name="Genome Biol.">
        <title>Structure and dynamics of the pan-genome of Streptococcus pneumoniae and closely related species.</title>
        <authorList>
            <person name="Donati C."/>
            <person name="Hiller N.L."/>
            <person name="Tettelin H."/>
            <person name="Muzzi A."/>
            <person name="Croucher N.J."/>
            <person name="Angiuoli S.V."/>
            <person name="Oggioni M."/>
            <person name="Dunning Hotopp J.C."/>
            <person name="Hu F.Z."/>
            <person name="Riley D.R."/>
            <person name="Covacci A."/>
            <person name="Mitchell T.J."/>
            <person name="Bentley S.D."/>
            <person name="Kilian M."/>
            <person name="Ehrlich G.D."/>
            <person name="Rappuoli R."/>
            <person name="Moxon E.R."/>
            <person name="Masignani V."/>
        </authorList>
    </citation>
    <scope>NUCLEOTIDE SEQUENCE [LARGE SCALE GENOMIC DNA]</scope>
    <source>
        <strain>Hungary19A-6</strain>
    </source>
</reference>
<feature type="chain" id="PRO_1000098237" description="6,7-dimethyl-8-ribityllumazine synthase">
    <location>
        <begin position="1"/>
        <end position="155"/>
    </location>
</feature>
<feature type="active site" description="Proton donor" evidence="1">
    <location>
        <position position="88"/>
    </location>
</feature>
<feature type="binding site" evidence="1">
    <location>
        <position position="22"/>
    </location>
    <ligand>
        <name>5-amino-6-(D-ribitylamino)uracil</name>
        <dbReference type="ChEBI" id="CHEBI:15934"/>
    </ligand>
</feature>
<feature type="binding site" evidence="1">
    <location>
        <begin position="56"/>
        <end position="58"/>
    </location>
    <ligand>
        <name>5-amino-6-(D-ribitylamino)uracil</name>
        <dbReference type="ChEBI" id="CHEBI:15934"/>
    </ligand>
</feature>
<feature type="binding site" evidence="1">
    <location>
        <begin position="80"/>
        <end position="82"/>
    </location>
    <ligand>
        <name>5-amino-6-(D-ribitylamino)uracil</name>
        <dbReference type="ChEBI" id="CHEBI:15934"/>
    </ligand>
</feature>
<feature type="binding site" evidence="1">
    <location>
        <begin position="85"/>
        <end position="86"/>
    </location>
    <ligand>
        <name>(2S)-2-hydroxy-3-oxobutyl phosphate</name>
        <dbReference type="ChEBI" id="CHEBI:58830"/>
    </ligand>
</feature>
<feature type="binding site" evidence="1">
    <location>
        <position position="113"/>
    </location>
    <ligand>
        <name>5-amino-6-(D-ribitylamino)uracil</name>
        <dbReference type="ChEBI" id="CHEBI:15934"/>
    </ligand>
</feature>
<feature type="binding site" evidence="1">
    <location>
        <position position="127"/>
    </location>
    <ligand>
        <name>(2S)-2-hydroxy-3-oxobutyl phosphate</name>
        <dbReference type="ChEBI" id="CHEBI:58830"/>
    </ligand>
</feature>
<gene>
    <name evidence="1" type="primary">ribH</name>
    <name type="ordered locus">SPH_0278</name>
</gene>
<comment type="function">
    <text evidence="1">Catalyzes the formation of 6,7-dimethyl-8-ribityllumazine by condensation of 5-amino-6-(D-ribitylamino)uracil with 3,4-dihydroxy-2-butanone 4-phosphate. This is the penultimate step in the biosynthesis of riboflavin.</text>
</comment>
<comment type="catalytic activity">
    <reaction evidence="1">
        <text>(2S)-2-hydroxy-3-oxobutyl phosphate + 5-amino-6-(D-ribitylamino)uracil = 6,7-dimethyl-8-(1-D-ribityl)lumazine + phosphate + 2 H2O + H(+)</text>
        <dbReference type="Rhea" id="RHEA:26152"/>
        <dbReference type="ChEBI" id="CHEBI:15377"/>
        <dbReference type="ChEBI" id="CHEBI:15378"/>
        <dbReference type="ChEBI" id="CHEBI:15934"/>
        <dbReference type="ChEBI" id="CHEBI:43474"/>
        <dbReference type="ChEBI" id="CHEBI:58201"/>
        <dbReference type="ChEBI" id="CHEBI:58830"/>
        <dbReference type="EC" id="2.5.1.78"/>
    </reaction>
</comment>
<comment type="pathway">
    <text evidence="1">Cofactor biosynthesis; riboflavin biosynthesis; riboflavin from 2-hydroxy-3-oxobutyl phosphate and 5-amino-6-(D-ribitylamino)uracil: step 1/2.</text>
</comment>
<comment type="similarity">
    <text evidence="1">Belongs to the DMRL synthase family.</text>
</comment>
<proteinExistence type="inferred from homology"/>